<organism>
    <name type="scientific">Chromohalobacter salexigens (strain ATCC BAA-138 / DSM 3043 / CIP 106854 / NCIMB 13768 / 1H11)</name>
    <dbReference type="NCBI Taxonomy" id="290398"/>
    <lineage>
        <taxon>Bacteria</taxon>
        <taxon>Pseudomonadati</taxon>
        <taxon>Pseudomonadota</taxon>
        <taxon>Gammaproteobacteria</taxon>
        <taxon>Oceanospirillales</taxon>
        <taxon>Halomonadaceae</taxon>
        <taxon>Chromohalobacter</taxon>
    </lineage>
</organism>
<sequence>MSDDRYCVFGNPVAHSRSPRIHALFAEQCGQAMTYEAIEAPREDFAGAWHAFVAAGGCGANVTVPFKEDAFRLADVLSQRARRAGAVNTLVRGRDGRTYADTTDGVGLVRDLEAHGVTLEGARILILGAGGAVRGVLDPLLAKAPSCLHIANRTASKAVRLAEEASPEGRVTGGGYSELDGAFDVVINGTSASLGGELPPLPDTLLAADGVAYDMMYAAEPTVFLQWAAAHGGRGIDGLGMLIEQAAESFFLWRQVRPDTAPVRETLRREL</sequence>
<keyword id="KW-0028">Amino-acid biosynthesis</keyword>
<keyword id="KW-0057">Aromatic amino acid biosynthesis</keyword>
<keyword id="KW-0521">NADP</keyword>
<keyword id="KW-0560">Oxidoreductase</keyword>
<keyword id="KW-1185">Reference proteome</keyword>
<accession>Q1QTK0</accession>
<comment type="function">
    <text evidence="1">Involved in the biosynthesis of the chorismate, which leads to the biosynthesis of aromatic amino acids. Catalyzes the reversible NADPH linked reduction of 3-dehydroshikimate (DHSA) to yield shikimate (SA).</text>
</comment>
<comment type="catalytic activity">
    <reaction evidence="1">
        <text>shikimate + NADP(+) = 3-dehydroshikimate + NADPH + H(+)</text>
        <dbReference type="Rhea" id="RHEA:17737"/>
        <dbReference type="ChEBI" id="CHEBI:15378"/>
        <dbReference type="ChEBI" id="CHEBI:16630"/>
        <dbReference type="ChEBI" id="CHEBI:36208"/>
        <dbReference type="ChEBI" id="CHEBI:57783"/>
        <dbReference type="ChEBI" id="CHEBI:58349"/>
        <dbReference type="EC" id="1.1.1.25"/>
    </reaction>
</comment>
<comment type="pathway">
    <text evidence="1">Metabolic intermediate biosynthesis; chorismate biosynthesis; chorismate from D-erythrose 4-phosphate and phosphoenolpyruvate: step 4/7.</text>
</comment>
<comment type="subunit">
    <text evidence="1">Homodimer.</text>
</comment>
<comment type="similarity">
    <text evidence="1">Belongs to the shikimate dehydrogenase family.</text>
</comment>
<protein>
    <recommendedName>
        <fullName evidence="1">Shikimate dehydrogenase (NADP(+))</fullName>
        <shortName evidence="1">SDH</shortName>
        <ecNumber evidence="1">1.1.1.25</ecNumber>
    </recommendedName>
</protein>
<feature type="chain" id="PRO_1000021272" description="Shikimate dehydrogenase (NADP(+))">
    <location>
        <begin position="1"/>
        <end position="271"/>
    </location>
</feature>
<feature type="active site" description="Proton acceptor" evidence="1">
    <location>
        <position position="67"/>
    </location>
</feature>
<feature type="binding site" evidence="1">
    <location>
        <begin position="16"/>
        <end position="18"/>
    </location>
    <ligand>
        <name>shikimate</name>
        <dbReference type="ChEBI" id="CHEBI:36208"/>
    </ligand>
</feature>
<feature type="binding site" evidence="1">
    <location>
        <position position="63"/>
    </location>
    <ligand>
        <name>shikimate</name>
        <dbReference type="ChEBI" id="CHEBI:36208"/>
    </ligand>
</feature>
<feature type="binding site" evidence="1">
    <location>
        <position position="88"/>
    </location>
    <ligand>
        <name>shikimate</name>
        <dbReference type="ChEBI" id="CHEBI:36208"/>
    </ligand>
</feature>
<feature type="binding site" evidence="1">
    <location>
        <position position="104"/>
    </location>
    <ligand>
        <name>shikimate</name>
        <dbReference type="ChEBI" id="CHEBI:36208"/>
    </ligand>
</feature>
<feature type="binding site" evidence="1">
    <location>
        <begin position="128"/>
        <end position="132"/>
    </location>
    <ligand>
        <name>NADP(+)</name>
        <dbReference type="ChEBI" id="CHEBI:58349"/>
    </ligand>
</feature>
<feature type="binding site" evidence="1">
    <location>
        <begin position="152"/>
        <end position="157"/>
    </location>
    <ligand>
        <name>NADP(+)</name>
        <dbReference type="ChEBI" id="CHEBI:58349"/>
    </ligand>
</feature>
<feature type="binding site" evidence="1">
    <location>
        <position position="215"/>
    </location>
    <ligand>
        <name>NADP(+)</name>
        <dbReference type="ChEBI" id="CHEBI:58349"/>
    </ligand>
</feature>
<feature type="binding site" evidence="1">
    <location>
        <position position="217"/>
    </location>
    <ligand>
        <name>shikimate</name>
        <dbReference type="ChEBI" id="CHEBI:36208"/>
    </ligand>
</feature>
<feature type="binding site" evidence="1">
    <location>
        <position position="238"/>
    </location>
    <ligand>
        <name>NADP(+)</name>
        <dbReference type="ChEBI" id="CHEBI:58349"/>
    </ligand>
</feature>
<evidence type="ECO:0000255" key="1">
    <source>
        <dbReference type="HAMAP-Rule" id="MF_00222"/>
    </source>
</evidence>
<proteinExistence type="inferred from homology"/>
<reference key="1">
    <citation type="journal article" date="2011" name="Stand. Genomic Sci.">
        <title>Complete genome sequence of the halophilic and highly halotolerant Chromohalobacter salexigens type strain (1H11(T)).</title>
        <authorList>
            <person name="Copeland A."/>
            <person name="O'Connor K."/>
            <person name="Lucas S."/>
            <person name="Lapidus A."/>
            <person name="Berry K.W."/>
            <person name="Detter J.C."/>
            <person name="Del Rio T.G."/>
            <person name="Hammon N."/>
            <person name="Dalin E."/>
            <person name="Tice H."/>
            <person name="Pitluck S."/>
            <person name="Bruce D."/>
            <person name="Goodwin L."/>
            <person name="Han C."/>
            <person name="Tapia R."/>
            <person name="Saunders E."/>
            <person name="Schmutz J."/>
            <person name="Brettin T."/>
            <person name="Larimer F."/>
            <person name="Land M."/>
            <person name="Hauser L."/>
            <person name="Vargas C."/>
            <person name="Nieto J.J."/>
            <person name="Kyrpides N.C."/>
            <person name="Ivanova N."/>
            <person name="Goker M."/>
            <person name="Klenk H.P."/>
            <person name="Csonka L.N."/>
            <person name="Woyke T."/>
        </authorList>
    </citation>
    <scope>NUCLEOTIDE SEQUENCE [LARGE SCALE GENOMIC DNA]</scope>
    <source>
        <strain>ATCC BAA-138 / DSM 3043 / CIP 106854 / NCIMB 13768 / 1H11</strain>
    </source>
</reference>
<gene>
    <name evidence="1" type="primary">aroE</name>
    <name type="ordered locus">Csal_2862</name>
</gene>
<name>AROE_CHRSD</name>
<dbReference type="EC" id="1.1.1.25" evidence="1"/>
<dbReference type="EMBL" id="CP000285">
    <property type="protein sequence ID" value="ABE60208.1"/>
    <property type="molecule type" value="Genomic_DNA"/>
</dbReference>
<dbReference type="RefSeq" id="WP_011508154.1">
    <property type="nucleotide sequence ID" value="NC_007963.1"/>
</dbReference>
<dbReference type="SMR" id="Q1QTK0"/>
<dbReference type="STRING" id="290398.Csal_2862"/>
<dbReference type="GeneID" id="95335557"/>
<dbReference type="KEGG" id="csa:Csal_2862"/>
<dbReference type="eggNOG" id="COG0169">
    <property type="taxonomic scope" value="Bacteria"/>
</dbReference>
<dbReference type="HOGENOM" id="CLU_044063_2_1_6"/>
<dbReference type="OrthoDB" id="9776868at2"/>
<dbReference type="UniPathway" id="UPA00053">
    <property type="reaction ID" value="UER00087"/>
</dbReference>
<dbReference type="Proteomes" id="UP000000239">
    <property type="component" value="Chromosome"/>
</dbReference>
<dbReference type="GO" id="GO:0005829">
    <property type="term" value="C:cytosol"/>
    <property type="evidence" value="ECO:0007669"/>
    <property type="project" value="TreeGrafter"/>
</dbReference>
<dbReference type="GO" id="GO:0050661">
    <property type="term" value="F:NADP binding"/>
    <property type="evidence" value="ECO:0007669"/>
    <property type="project" value="InterPro"/>
</dbReference>
<dbReference type="GO" id="GO:0004764">
    <property type="term" value="F:shikimate 3-dehydrogenase (NADP+) activity"/>
    <property type="evidence" value="ECO:0007669"/>
    <property type="project" value="UniProtKB-UniRule"/>
</dbReference>
<dbReference type="GO" id="GO:0008652">
    <property type="term" value="P:amino acid biosynthetic process"/>
    <property type="evidence" value="ECO:0007669"/>
    <property type="project" value="UniProtKB-KW"/>
</dbReference>
<dbReference type="GO" id="GO:0009073">
    <property type="term" value="P:aromatic amino acid family biosynthetic process"/>
    <property type="evidence" value="ECO:0007669"/>
    <property type="project" value="UniProtKB-KW"/>
</dbReference>
<dbReference type="GO" id="GO:0009423">
    <property type="term" value="P:chorismate biosynthetic process"/>
    <property type="evidence" value="ECO:0007669"/>
    <property type="project" value="UniProtKB-UniRule"/>
</dbReference>
<dbReference type="GO" id="GO:0019632">
    <property type="term" value="P:shikimate metabolic process"/>
    <property type="evidence" value="ECO:0007669"/>
    <property type="project" value="InterPro"/>
</dbReference>
<dbReference type="CDD" id="cd01065">
    <property type="entry name" value="NAD_bind_Shikimate_DH"/>
    <property type="match status" value="1"/>
</dbReference>
<dbReference type="FunFam" id="3.40.50.10860:FF:000006">
    <property type="entry name" value="Shikimate dehydrogenase (NADP(+))"/>
    <property type="match status" value="1"/>
</dbReference>
<dbReference type="Gene3D" id="3.40.50.10860">
    <property type="entry name" value="Leucine Dehydrogenase, chain A, domain 1"/>
    <property type="match status" value="1"/>
</dbReference>
<dbReference type="Gene3D" id="3.40.50.720">
    <property type="entry name" value="NAD(P)-binding Rossmann-like Domain"/>
    <property type="match status" value="1"/>
</dbReference>
<dbReference type="HAMAP" id="MF_00222">
    <property type="entry name" value="Shikimate_DH_AroE"/>
    <property type="match status" value="1"/>
</dbReference>
<dbReference type="InterPro" id="IPR046346">
    <property type="entry name" value="Aminoacid_DH-like_N_sf"/>
</dbReference>
<dbReference type="InterPro" id="IPR036291">
    <property type="entry name" value="NAD(P)-bd_dom_sf"/>
</dbReference>
<dbReference type="InterPro" id="IPR041121">
    <property type="entry name" value="SDH_C"/>
</dbReference>
<dbReference type="InterPro" id="IPR011342">
    <property type="entry name" value="Shikimate_DH"/>
</dbReference>
<dbReference type="InterPro" id="IPR013708">
    <property type="entry name" value="Shikimate_DH-bd_N"/>
</dbReference>
<dbReference type="InterPro" id="IPR022893">
    <property type="entry name" value="Shikimate_DH_fam"/>
</dbReference>
<dbReference type="InterPro" id="IPR006151">
    <property type="entry name" value="Shikm_DH/Glu-tRNA_Rdtase"/>
</dbReference>
<dbReference type="NCBIfam" id="TIGR00507">
    <property type="entry name" value="aroE"/>
    <property type="match status" value="1"/>
</dbReference>
<dbReference type="NCBIfam" id="NF001310">
    <property type="entry name" value="PRK00258.1-2"/>
    <property type="match status" value="1"/>
</dbReference>
<dbReference type="PANTHER" id="PTHR21089:SF1">
    <property type="entry name" value="BIFUNCTIONAL 3-DEHYDROQUINATE DEHYDRATASE_SHIKIMATE DEHYDROGENASE, CHLOROPLASTIC"/>
    <property type="match status" value="1"/>
</dbReference>
<dbReference type="PANTHER" id="PTHR21089">
    <property type="entry name" value="SHIKIMATE DEHYDROGENASE"/>
    <property type="match status" value="1"/>
</dbReference>
<dbReference type="Pfam" id="PF18317">
    <property type="entry name" value="SDH_C"/>
    <property type="match status" value="1"/>
</dbReference>
<dbReference type="Pfam" id="PF01488">
    <property type="entry name" value="Shikimate_DH"/>
    <property type="match status" value="1"/>
</dbReference>
<dbReference type="Pfam" id="PF08501">
    <property type="entry name" value="Shikimate_dh_N"/>
    <property type="match status" value="1"/>
</dbReference>
<dbReference type="SUPFAM" id="SSF53223">
    <property type="entry name" value="Aminoacid dehydrogenase-like, N-terminal domain"/>
    <property type="match status" value="1"/>
</dbReference>
<dbReference type="SUPFAM" id="SSF51735">
    <property type="entry name" value="NAD(P)-binding Rossmann-fold domains"/>
    <property type="match status" value="1"/>
</dbReference>